<keyword id="KW-0012">Acyltransferase</keyword>
<keyword id="KW-0963">Cytoplasm</keyword>
<keyword id="KW-0808">Transferase</keyword>
<protein>
    <recommendedName>
        <fullName evidence="1">Octanoyltransferase</fullName>
        <ecNumber evidence="1">2.3.1.181</ecNumber>
    </recommendedName>
    <alternativeName>
        <fullName evidence="1">Lipoate-protein ligase B</fullName>
    </alternativeName>
    <alternativeName>
        <fullName evidence="1">Lipoyl/octanoyl transferase</fullName>
    </alternativeName>
    <alternativeName>
        <fullName evidence="1">Octanoyl-[acyl-carrier-protein]-protein N-octanoyltransferase</fullName>
    </alternativeName>
</protein>
<organism>
    <name type="scientific">Psychrobacter cryohalolentis (strain ATCC BAA-1226 / DSM 17306 / VKM B-2378 / K5)</name>
    <dbReference type="NCBI Taxonomy" id="335284"/>
    <lineage>
        <taxon>Bacteria</taxon>
        <taxon>Pseudomonadati</taxon>
        <taxon>Pseudomonadota</taxon>
        <taxon>Gammaproteobacteria</taxon>
        <taxon>Moraxellales</taxon>
        <taxon>Moraxellaceae</taxon>
        <taxon>Psychrobacter</taxon>
    </lineage>
</organism>
<gene>
    <name evidence="1" type="primary">lipB</name>
    <name type="ordered locus">Pcryo_1084</name>
</gene>
<comment type="function">
    <text evidence="1">Catalyzes the transfer of endogenously produced octanoic acid from octanoyl-acyl-carrier-protein onto the lipoyl domains of lipoate-dependent enzymes. Lipoyl-ACP can also act as a substrate although octanoyl-ACP is likely to be the physiological substrate.</text>
</comment>
<comment type="catalytic activity">
    <reaction evidence="1">
        <text>octanoyl-[ACP] + L-lysyl-[protein] = N(6)-octanoyl-L-lysyl-[protein] + holo-[ACP] + H(+)</text>
        <dbReference type="Rhea" id="RHEA:17665"/>
        <dbReference type="Rhea" id="RHEA-COMP:9636"/>
        <dbReference type="Rhea" id="RHEA-COMP:9685"/>
        <dbReference type="Rhea" id="RHEA-COMP:9752"/>
        <dbReference type="Rhea" id="RHEA-COMP:9928"/>
        <dbReference type="ChEBI" id="CHEBI:15378"/>
        <dbReference type="ChEBI" id="CHEBI:29969"/>
        <dbReference type="ChEBI" id="CHEBI:64479"/>
        <dbReference type="ChEBI" id="CHEBI:78463"/>
        <dbReference type="ChEBI" id="CHEBI:78809"/>
        <dbReference type="EC" id="2.3.1.181"/>
    </reaction>
</comment>
<comment type="pathway">
    <text evidence="1">Protein modification; protein lipoylation via endogenous pathway; protein N(6)-(lipoyl)lysine from octanoyl-[acyl-carrier-protein]: step 1/2.</text>
</comment>
<comment type="subcellular location">
    <subcellularLocation>
        <location evidence="1">Cytoplasm</location>
    </subcellularLocation>
</comment>
<comment type="miscellaneous">
    <text evidence="1">In the reaction, the free carboxyl group of octanoic acid is attached via an amide linkage to the epsilon-amino group of a specific lysine residue of lipoyl domains of lipoate-dependent enzymes.</text>
</comment>
<comment type="similarity">
    <text evidence="1">Belongs to the LipB family.</text>
</comment>
<dbReference type="EC" id="2.3.1.181" evidence="1"/>
<dbReference type="EMBL" id="CP000323">
    <property type="protein sequence ID" value="ABE74865.1"/>
    <property type="molecule type" value="Genomic_DNA"/>
</dbReference>
<dbReference type="RefSeq" id="WP_011513421.1">
    <property type="nucleotide sequence ID" value="NC_007969.1"/>
</dbReference>
<dbReference type="SMR" id="Q1QBT8"/>
<dbReference type="STRING" id="335284.Pcryo_1084"/>
<dbReference type="KEGG" id="pcr:Pcryo_1084"/>
<dbReference type="eggNOG" id="COG0321">
    <property type="taxonomic scope" value="Bacteria"/>
</dbReference>
<dbReference type="HOGENOM" id="CLU_035168_3_1_6"/>
<dbReference type="UniPathway" id="UPA00538">
    <property type="reaction ID" value="UER00592"/>
</dbReference>
<dbReference type="Proteomes" id="UP000002425">
    <property type="component" value="Chromosome"/>
</dbReference>
<dbReference type="GO" id="GO:0005737">
    <property type="term" value="C:cytoplasm"/>
    <property type="evidence" value="ECO:0007669"/>
    <property type="project" value="UniProtKB-SubCell"/>
</dbReference>
<dbReference type="GO" id="GO:0033819">
    <property type="term" value="F:lipoyl(octanoyl) transferase activity"/>
    <property type="evidence" value="ECO:0007669"/>
    <property type="project" value="UniProtKB-EC"/>
</dbReference>
<dbReference type="GO" id="GO:0036211">
    <property type="term" value="P:protein modification process"/>
    <property type="evidence" value="ECO:0007669"/>
    <property type="project" value="InterPro"/>
</dbReference>
<dbReference type="CDD" id="cd16444">
    <property type="entry name" value="LipB"/>
    <property type="match status" value="1"/>
</dbReference>
<dbReference type="Gene3D" id="3.30.930.10">
    <property type="entry name" value="Bira Bifunctional Protein, Domain 2"/>
    <property type="match status" value="1"/>
</dbReference>
<dbReference type="HAMAP" id="MF_00013">
    <property type="entry name" value="LipB"/>
    <property type="match status" value="1"/>
</dbReference>
<dbReference type="InterPro" id="IPR045864">
    <property type="entry name" value="aa-tRNA-synth_II/BPL/LPL"/>
</dbReference>
<dbReference type="InterPro" id="IPR004143">
    <property type="entry name" value="BPL_LPL_catalytic"/>
</dbReference>
<dbReference type="InterPro" id="IPR000544">
    <property type="entry name" value="Octanoyltransferase"/>
</dbReference>
<dbReference type="InterPro" id="IPR020605">
    <property type="entry name" value="Octanoyltransferase_CS"/>
</dbReference>
<dbReference type="NCBIfam" id="TIGR00214">
    <property type="entry name" value="lipB"/>
    <property type="match status" value="1"/>
</dbReference>
<dbReference type="PANTHER" id="PTHR10993:SF7">
    <property type="entry name" value="LIPOYLTRANSFERASE 2, MITOCHONDRIAL-RELATED"/>
    <property type="match status" value="1"/>
</dbReference>
<dbReference type="PANTHER" id="PTHR10993">
    <property type="entry name" value="OCTANOYLTRANSFERASE"/>
    <property type="match status" value="1"/>
</dbReference>
<dbReference type="Pfam" id="PF21948">
    <property type="entry name" value="LplA-B_cat"/>
    <property type="match status" value="1"/>
</dbReference>
<dbReference type="PIRSF" id="PIRSF016262">
    <property type="entry name" value="LPLase"/>
    <property type="match status" value="1"/>
</dbReference>
<dbReference type="SUPFAM" id="SSF55681">
    <property type="entry name" value="Class II aaRS and biotin synthetases"/>
    <property type="match status" value="1"/>
</dbReference>
<dbReference type="PROSITE" id="PS51733">
    <property type="entry name" value="BPL_LPL_CATALYTIC"/>
    <property type="match status" value="1"/>
</dbReference>
<dbReference type="PROSITE" id="PS01313">
    <property type="entry name" value="LIPB"/>
    <property type="match status" value="1"/>
</dbReference>
<accession>Q1QBT8</accession>
<sequence>MPNTMQALHTRPLNENLITKSLTAADYVATLDAMLSRTLERISLKKEQGLRTPDELWIVDHNDVYTLGQAGKEEHILQRTNTPIIKTDRGGQVTWHGHGQLVMYWLFDLDSISWSVRNMVSHAEQAIEDVVNDCLKSTASTDTNHISARARRDAPGVYLYADMATETDSAPTSDEIEVDNTIMIGKIASLGFKIKHGFSYHGIAINLDCDLSAFNAINPCGYAGMQMLRLADFVNMNQATNIQPNNLPLTDDKKTLTYEQFTQQLIDNIAQRHAGDIPLRELAPK</sequence>
<evidence type="ECO:0000255" key="1">
    <source>
        <dbReference type="HAMAP-Rule" id="MF_00013"/>
    </source>
</evidence>
<evidence type="ECO:0000255" key="2">
    <source>
        <dbReference type="PROSITE-ProRule" id="PRU01067"/>
    </source>
</evidence>
<name>LIPB_PSYCK</name>
<reference key="1">
    <citation type="submission" date="2006-03" db="EMBL/GenBank/DDBJ databases">
        <title>Complete sequence of chromosome of Psychrobacter cryohalolentis K5.</title>
        <authorList>
            <consortium name="US DOE Joint Genome Institute"/>
            <person name="Copeland A."/>
            <person name="Lucas S."/>
            <person name="Lapidus A."/>
            <person name="Barry K."/>
            <person name="Detter J.C."/>
            <person name="Glavina T."/>
            <person name="Hammon N."/>
            <person name="Israni S."/>
            <person name="Dalin E."/>
            <person name="Tice H."/>
            <person name="Pitluck S."/>
            <person name="Brettin T."/>
            <person name="Bruce D."/>
            <person name="Han C."/>
            <person name="Tapia R."/>
            <person name="Sims D.R."/>
            <person name="Gilna P."/>
            <person name="Schmutz J."/>
            <person name="Larimer F."/>
            <person name="Land M."/>
            <person name="Hauser L."/>
            <person name="Kyrpides N."/>
            <person name="Kim E."/>
            <person name="Richardson P."/>
        </authorList>
    </citation>
    <scope>NUCLEOTIDE SEQUENCE [LARGE SCALE GENOMIC DNA]</scope>
    <source>
        <strain>ATCC BAA-1226 / DSM 17306 / VKM B-2378 / K5</strain>
    </source>
</reference>
<proteinExistence type="inferred from homology"/>
<feature type="chain" id="PRO_0000242751" description="Octanoyltransferase">
    <location>
        <begin position="1"/>
        <end position="285"/>
    </location>
</feature>
<feature type="domain" description="BPL/LPL catalytic" evidence="2">
    <location>
        <begin position="50"/>
        <end position="277"/>
    </location>
</feature>
<feature type="active site" description="Acyl-thioester intermediate" evidence="1">
    <location>
        <position position="220"/>
    </location>
</feature>
<feature type="binding site" evidence="1">
    <location>
        <begin position="89"/>
        <end position="96"/>
    </location>
    <ligand>
        <name>substrate</name>
    </ligand>
</feature>
<feature type="binding site" evidence="1">
    <location>
        <begin position="189"/>
        <end position="191"/>
    </location>
    <ligand>
        <name>substrate</name>
    </ligand>
</feature>
<feature type="binding site" evidence="1">
    <location>
        <begin position="202"/>
        <end position="204"/>
    </location>
    <ligand>
        <name>substrate</name>
    </ligand>
</feature>
<feature type="site" description="Lowers pKa of active site Cys" evidence="1">
    <location>
        <position position="186"/>
    </location>
</feature>